<geneLocation type="chloroplast"/>
<feature type="chain" id="PRO_0000143525" description="Maturase K">
    <location>
        <begin position="1"/>
        <end position="511"/>
    </location>
</feature>
<protein>
    <recommendedName>
        <fullName evidence="1">Maturase K</fullName>
    </recommendedName>
    <alternativeName>
        <fullName evidence="1">Intron maturase</fullName>
    </alternativeName>
</protein>
<reference key="1">
    <citation type="journal article" date="2005" name="BMC Evol. Biol.">
        <title>Rate variation in parasitic plants: correlated and uncorrelated patterns among plastid genes of different function.</title>
        <authorList>
            <person name="Young N.D."/>
            <person name="dePamphilis C.W."/>
        </authorList>
    </citation>
    <scope>NUCLEOTIDE SEQUENCE [GENOMIC DNA]</scope>
</reference>
<evidence type="ECO:0000255" key="1">
    <source>
        <dbReference type="HAMAP-Rule" id="MF_01390"/>
    </source>
</evidence>
<accession>Q5I6K1</accession>
<gene>
    <name evidence="1" type="primary">matK</name>
</gene>
<organism>
    <name type="scientific">Diplacus aurantiacus</name>
    <name type="common">Orange bush monkey flower</name>
    <name type="synonym">Mimulus aurantiacus</name>
    <dbReference type="NCBI Taxonomy" id="68869"/>
    <lineage>
        <taxon>Eukaryota</taxon>
        <taxon>Viridiplantae</taxon>
        <taxon>Streptophyta</taxon>
        <taxon>Embryophyta</taxon>
        <taxon>Tracheophyta</taxon>
        <taxon>Spermatophyta</taxon>
        <taxon>Magnoliopsida</taxon>
        <taxon>eudicotyledons</taxon>
        <taxon>Gunneridae</taxon>
        <taxon>Pentapetalae</taxon>
        <taxon>asterids</taxon>
        <taxon>lamiids</taxon>
        <taxon>Lamiales</taxon>
        <taxon>Phrymaceae</taxon>
        <taxon>Diplacus</taxon>
    </lineage>
</organism>
<comment type="function">
    <text evidence="1">Usually encoded in the trnK tRNA gene intron. Probably assists in splicing its own and other chloroplast group II introns.</text>
</comment>
<comment type="subcellular location">
    <subcellularLocation>
        <location>Plastid</location>
        <location>Chloroplast</location>
    </subcellularLocation>
</comment>
<comment type="similarity">
    <text evidence="1">Belongs to the intron maturase 2 family. MatK subfamily.</text>
</comment>
<dbReference type="EMBL" id="AY849605">
    <property type="protein sequence ID" value="AAW45738.1"/>
    <property type="molecule type" value="Genomic_DNA"/>
</dbReference>
<dbReference type="GO" id="GO:0009507">
    <property type="term" value="C:chloroplast"/>
    <property type="evidence" value="ECO:0007669"/>
    <property type="project" value="UniProtKB-SubCell"/>
</dbReference>
<dbReference type="GO" id="GO:0003723">
    <property type="term" value="F:RNA binding"/>
    <property type="evidence" value="ECO:0007669"/>
    <property type="project" value="UniProtKB-KW"/>
</dbReference>
<dbReference type="GO" id="GO:0006397">
    <property type="term" value="P:mRNA processing"/>
    <property type="evidence" value="ECO:0007669"/>
    <property type="project" value="UniProtKB-KW"/>
</dbReference>
<dbReference type="GO" id="GO:0008380">
    <property type="term" value="P:RNA splicing"/>
    <property type="evidence" value="ECO:0007669"/>
    <property type="project" value="UniProtKB-UniRule"/>
</dbReference>
<dbReference type="GO" id="GO:0008033">
    <property type="term" value="P:tRNA processing"/>
    <property type="evidence" value="ECO:0007669"/>
    <property type="project" value="UniProtKB-KW"/>
</dbReference>
<dbReference type="HAMAP" id="MF_01390">
    <property type="entry name" value="MatK"/>
    <property type="match status" value="1"/>
</dbReference>
<dbReference type="InterPro" id="IPR024937">
    <property type="entry name" value="Domain_X"/>
</dbReference>
<dbReference type="InterPro" id="IPR002866">
    <property type="entry name" value="Maturase_MatK"/>
</dbReference>
<dbReference type="InterPro" id="IPR024942">
    <property type="entry name" value="Maturase_MatK_N"/>
</dbReference>
<dbReference type="PANTHER" id="PTHR34811">
    <property type="entry name" value="MATURASE K"/>
    <property type="match status" value="1"/>
</dbReference>
<dbReference type="PANTHER" id="PTHR34811:SF1">
    <property type="entry name" value="MATURASE K"/>
    <property type="match status" value="1"/>
</dbReference>
<dbReference type="Pfam" id="PF01348">
    <property type="entry name" value="Intron_maturas2"/>
    <property type="match status" value="1"/>
</dbReference>
<dbReference type="Pfam" id="PF01824">
    <property type="entry name" value="MatK_N"/>
    <property type="match status" value="1"/>
</dbReference>
<proteinExistence type="inferred from homology"/>
<name>MATK_DIPAU</name>
<keyword id="KW-0150">Chloroplast</keyword>
<keyword id="KW-0507">mRNA processing</keyword>
<keyword id="KW-0934">Plastid</keyword>
<keyword id="KW-0694">RNA-binding</keyword>
<keyword id="KW-0819">tRNA processing</keyword>
<sequence>MEEIQRYLQLERSQQHDFLYPLIFQEYIYAFAHDRDFNRSILSENPGYDNKSSLLIVKRLITRMYQQNHFLISPNDSNQNTFLASKNDLRIQIISEGFAFIVEIPFSLRLISCLEGKKKKIVKSQNLRSIHSIFPFLEDHFSHLNFVLDILIPHPVHVEILVQTLRYWVKDASSLHLLRFFLNEYCNWNSLITPKKASSSFSKRNQRLFLFLYNSHVYEYESIFGFLRNQSSHLRSTSSGVLRERIHFYGKIERLVNVFVKVKDFQANLWLVKEPCMHYIRYQRKSILASKGTSLFMNKWKCYLVTFWQWHFSLWFHPRRIYINQLSNHSLEFLGYLSSVRMNPSVVRSQILENSFLINNAIKRVDTLVPIIPLIASLAKAKFCNVLGHPISKPVRADLSDSNIIDRFGRICRNLSHYHSGSSKKKSLYRIKYILRLSCARTLARKHKSTVRTFLKRLGSELLEEFLMSEEDVLFLTFPKVSSTLQGVYRSRIWYLDIISINDLANHKSKF</sequence>